<name>METAA_BRUC2</name>
<evidence type="ECO:0000255" key="1">
    <source>
        <dbReference type="HAMAP-Rule" id="MF_00295"/>
    </source>
</evidence>
<organism>
    <name type="scientific">Brucella canis (strain ATCC 23365 / NCTC 10854 / RM-666)</name>
    <dbReference type="NCBI Taxonomy" id="483179"/>
    <lineage>
        <taxon>Bacteria</taxon>
        <taxon>Pseudomonadati</taxon>
        <taxon>Pseudomonadota</taxon>
        <taxon>Alphaproteobacteria</taxon>
        <taxon>Hyphomicrobiales</taxon>
        <taxon>Brucellaceae</taxon>
        <taxon>Brucella/Ochrobactrum group</taxon>
        <taxon>Brucella</taxon>
    </lineage>
</organism>
<reference key="1">
    <citation type="submission" date="2007-10" db="EMBL/GenBank/DDBJ databases">
        <title>Brucella canis ATCC 23365 whole genome shotgun sequencing project.</title>
        <authorList>
            <person name="Setubal J.C."/>
            <person name="Bowns C."/>
            <person name="Boyle S."/>
            <person name="Crasta O.R."/>
            <person name="Czar M.J."/>
            <person name="Dharmanolla C."/>
            <person name="Gillespie J.J."/>
            <person name="Kenyon R.W."/>
            <person name="Lu J."/>
            <person name="Mane S."/>
            <person name="Mohapatra S."/>
            <person name="Nagrani S."/>
            <person name="Purkayastha A."/>
            <person name="Rajasimha H.K."/>
            <person name="Shallom J.M."/>
            <person name="Shallom S."/>
            <person name="Shukla M."/>
            <person name="Snyder E.E."/>
            <person name="Sobral B.W."/>
            <person name="Wattam A.R."/>
            <person name="Will R."/>
            <person name="Williams K."/>
            <person name="Yoo H."/>
            <person name="Bruce D."/>
            <person name="Detter C."/>
            <person name="Munk C."/>
            <person name="Brettin T.S."/>
        </authorList>
    </citation>
    <scope>NUCLEOTIDE SEQUENCE [LARGE SCALE GENOMIC DNA]</scope>
    <source>
        <strain>ATCC 23365 / NCTC 10854 / RM-666</strain>
    </source>
</reference>
<comment type="function">
    <text evidence="1">Transfers an acetyl group from acetyl-CoA to L-homoserine, forming acetyl-L-homoserine.</text>
</comment>
<comment type="catalytic activity">
    <reaction evidence="1">
        <text>L-homoserine + acetyl-CoA = O-acetyl-L-homoserine + CoA</text>
        <dbReference type="Rhea" id="RHEA:13701"/>
        <dbReference type="ChEBI" id="CHEBI:57287"/>
        <dbReference type="ChEBI" id="CHEBI:57288"/>
        <dbReference type="ChEBI" id="CHEBI:57476"/>
        <dbReference type="ChEBI" id="CHEBI:57716"/>
        <dbReference type="EC" id="2.3.1.31"/>
    </reaction>
</comment>
<comment type="pathway">
    <text evidence="1">Amino-acid biosynthesis; L-methionine biosynthesis via de novo pathway; O-acetyl-L-homoserine from L-homoserine: step 1/1.</text>
</comment>
<comment type="subcellular location">
    <subcellularLocation>
        <location evidence="1">Cytoplasm</location>
    </subcellularLocation>
</comment>
<comment type="similarity">
    <text evidence="1">Belongs to the MetA family.</text>
</comment>
<protein>
    <recommendedName>
        <fullName evidence="1">Homoserine O-acetyltransferase</fullName>
        <shortName evidence="1">HAT</shortName>
        <ecNumber evidence="1">2.3.1.31</ecNumber>
    </recommendedName>
    <alternativeName>
        <fullName evidence="1">Homoserine transacetylase</fullName>
        <shortName evidence="1">HTA</shortName>
    </alternativeName>
</protein>
<gene>
    <name evidence="1" type="primary">metAA</name>
    <name type="ordered locus">BCAN_B0488</name>
</gene>
<accession>A9MBD0</accession>
<dbReference type="EC" id="2.3.1.31" evidence="1"/>
<dbReference type="EMBL" id="CP000873">
    <property type="protein sequence ID" value="ABX63667.1"/>
    <property type="molecule type" value="Genomic_DNA"/>
</dbReference>
<dbReference type="SMR" id="A9MBD0"/>
<dbReference type="KEGG" id="bcs:BCAN_B0488"/>
<dbReference type="HOGENOM" id="CLU_057851_0_1_5"/>
<dbReference type="PhylomeDB" id="A9MBD0"/>
<dbReference type="UniPathway" id="UPA00051">
    <property type="reaction ID" value="UER00074"/>
</dbReference>
<dbReference type="Proteomes" id="UP000001385">
    <property type="component" value="Chromosome II"/>
</dbReference>
<dbReference type="GO" id="GO:0005737">
    <property type="term" value="C:cytoplasm"/>
    <property type="evidence" value="ECO:0007669"/>
    <property type="project" value="UniProtKB-SubCell"/>
</dbReference>
<dbReference type="GO" id="GO:0004414">
    <property type="term" value="F:homoserine O-acetyltransferase activity"/>
    <property type="evidence" value="ECO:0007669"/>
    <property type="project" value="UniProtKB-EC"/>
</dbReference>
<dbReference type="GO" id="GO:0008899">
    <property type="term" value="F:homoserine O-succinyltransferase activity"/>
    <property type="evidence" value="ECO:0007669"/>
    <property type="project" value="UniProtKB-UniRule"/>
</dbReference>
<dbReference type="GO" id="GO:0019281">
    <property type="term" value="P:L-methionine biosynthetic process from homoserine via O-succinyl-L-homoserine and cystathionine"/>
    <property type="evidence" value="ECO:0007669"/>
    <property type="project" value="InterPro"/>
</dbReference>
<dbReference type="CDD" id="cd03131">
    <property type="entry name" value="GATase1_HTS"/>
    <property type="match status" value="1"/>
</dbReference>
<dbReference type="Gene3D" id="3.40.50.880">
    <property type="match status" value="1"/>
</dbReference>
<dbReference type="HAMAP" id="MF_00295">
    <property type="entry name" value="MetA_acyltransf"/>
    <property type="match status" value="1"/>
</dbReference>
<dbReference type="InterPro" id="IPR029062">
    <property type="entry name" value="Class_I_gatase-like"/>
</dbReference>
<dbReference type="InterPro" id="IPR005697">
    <property type="entry name" value="HST_MetA"/>
</dbReference>
<dbReference type="InterPro" id="IPR033752">
    <property type="entry name" value="MetA_family"/>
</dbReference>
<dbReference type="NCBIfam" id="TIGR01001">
    <property type="entry name" value="metA"/>
    <property type="match status" value="1"/>
</dbReference>
<dbReference type="PANTHER" id="PTHR20919">
    <property type="entry name" value="HOMOSERINE O-SUCCINYLTRANSFERASE"/>
    <property type="match status" value="1"/>
</dbReference>
<dbReference type="PANTHER" id="PTHR20919:SF0">
    <property type="entry name" value="HOMOSERINE O-SUCCINYLTRANSFERASE"/>
    <property type="match status" value="1"/>
</dbReference>
<dbReference type="Pfam" id="PF04204">
    <property type="entry name" value="HTS"/>
    <property type="match status" value="1"/>
</dbReference>
<dbReference type="PIRSF" id="PIRSF000450">
    <property type="entry name" value="H_ser_succinyltr"/>
    <property type="match status" value="1"/>
</dbReference>
<dbReference type="SUPFAM" id="SSF52317">
    <property type="entry name" value="Class I glutamine amidotransferase-like"/>
    <property type="match status" value="1"/>
</dbReference>
<sequence>MPIKIPDDLPATSVLEAEGVMVMREADAVRQDIRPLRIGLLNLMPNKVTTETQIARLLGATPLQVELTLVRMTNHVARHTPADHMLSFYCPWEEVNDQRFDGFVITGAPVERLPFEEVTYWDEMRRVFDWTQSHVHRTLNICWAAQAAVYHFHGMKKYDLPAKASGVFRQRSLVPASPYLRGFSDDFAIPVSRWTEVRKSDIPADSGLKVLVDSTETGLCLLDDPRHRSLHMFNHVEYDTTSLADEYFRDIQVQPEAKVPVNYFPGDDAKRPPENRWRSHAHLLFGNWINEMYQSTPYDIERIGKV</sequence>
<proteinExistence type="inferred from homology"/>
<keyword id="KW-0012">Acyltransferase</keyword>
<keyword id="KW-0028">Amino-acid biosynthesis</keyword>
<keyword id="KW-0963">Cytoplasm</keyword>
<keyword id="KW-0486">Methionine biosynthesis</keyword>
<keyword id="KW-1185">Reference proteome</keyword>
<keyword id="KW-0808">Transferase</keyword>
<feature type="chain" id="PRO_1000078927" description="Homoserine O-acetyltransferase">
    <location>
        <begin position="1"/>
        <end position="306"/>
    </location>
</feature>
<feature type="active site" description="Acyl-thioester intermediate" evidence="1">
    <location>
        <position position="142"/>
    </location>
</feature>
<feature type="active site" description="Proton acceptor" evidence="1">
    <location>
        <position position="235"/>
    </location>
</feature>
<feature type="active site" evidence="1">
    <location>
        <position position="237"/>
    </location>
</feature>
<feature type="binding site" evidence="1">
    <location>
        <position position="163"/>
    </location>
    <ligand>
        <name>substrate</name>
    </ligand>
</feature>
<feature type="binding site" evidence="1">
    <location>
        <position position="192"/>
    </location>
    <ligand>
        <name>substrate</name>
    </ligand>
</feature>
<feature type="binding site" evidence="1">
    <location>
        <position position="249"/>
    </location>
    <ligand>
        <name>substrate</name>
    </ligand>
</feature>
<feature type="site" description="Important for acyl-CoA specificity" evidence="1">
    <location>
        <position position="111"/>
    </location>
</feature>
<feature type="site" description="Important for substrate specificity" evidence="1">
    <location>
        <position position="192"/>
    </location>
</feature>